<name>PHRF_BACSU</name>
<sequence length="39" mass="4199">MKLKSKLLLSCLALSTVFVATTIANAPTHQIEVAQRGMI</sequence>
<protein>
    <recommendedName>
        <fullName evidence="7">RapF inhibitor</fullName>
    </recommendedName>
    <alternativeName>
        <fullName evidence="6">Signaling peptide PhrF</fullName>
    </alternativeName>
</protein>
<evidence type="ECO:0000250" key="1">
    <source>
        <dbReference type="UniProtKB" id="P94416"/>
    </source>
</evidence>
<evidence type="ECO:0000269" key="2">
    <source>
    </source>
</evidence>
<evidence type="ECO:0000269" key="3">
    <source>
    </source>
</evidence>
<evidence type="ECO:0000269" key="4">
    <source>
    </source>
</evidence>
<evidence type="ECO:0000269" key="5">
    <source>
    </source>
</evidence>
<evidence type="ECO:0000303" key="6">
    <source>
    </source>
</evidence>
<evidence type="ECO:0000305" key="7"/>
<evidence type="ECO:0000305" key="8">
    <source>
    </source>
</evidence>
<accession>P71001</accession>
<reference key="1">
    <citation type="journal article" date="1997" name="Microbiology">
        <title>The Bacillus subtilis genome from gerBC (311 degrees) to licR (334 degrees).</title>
        <authorList>
            <person name="Presecan E."/>
            <person name="Moszer I."/>
            <person name="Boursier L."/>
            <person name="Cruz Ramos H."/>
            <person name="De La Fuente V."/>
            <person name="Hullo M.-F."/>
            <person name="Lelong C."/>
            <person name="Schleich S."/>
            <person name="Sekowska A."/>
            <person name="Song B.H."/>
            <person name="Villani G."/>
            <person name="Kunst F."/>
            <person name="Danchin A."/>
            <person name="Glaser P."/>
        </authorList>
    </citation>
    <scope>NUCLEOTIDE SEQUENCE [GENOMIC DNA]</scope>
    <source>
        <strain>168</strain>
    </source>
</reference>
<reference key="2">
    <citation type="journal article" date="1997" name="Nature">
        <title>The complete genome sequence of the Gram-positive bacterium Bacillus subtilis.</title>
        <authorList>
            <person name="Kunst F."/>
            <person name="Ogasawara N."/>
            <person name="Moszer I."/>
            <person name="Albertini A.M."/>
            <person name="Alloni G."/>
            <person name="Azevedo V."/>
            <person name="Bertero M.G."/>
            <person name="Bessieres P."/>
            <person name="Bolotin A."/>
            <person name="Borchert S."/>
            <person name="Borriss R."/>
            <person name="Boursier L."/>
            <person name="Brans A."/>
            <person name="Braun M."/>
            <person name="Brignell S.C."/>
            <person name="Bron S."/>
            <person name="Brouillet S."/>
            <person name="Bruschi C.V."/>
            <person name="Caldwell B."/>
            <person name="Capuano V."/>
            <person name="Carter N.M."/>
            <person name="Choi S.-K."/>
            <person name="Codani J.-J."/>
            <person name="Connerton I.F."/>
            <person name="Cummings N.J."/>
            <person name="Daniel R.A."/>
            <person name="Denizot F."/>
            <person name="Devine K.M."/>
            <person name="Duesterhoeft A."/>
            <person name="Ehrlich S.D."/>
            <person name="Emmerson P.T."/>
            <person name="Entian K.-D."/>
            <person name="Errington J."/>
            <person name="Fabret C."/>
            <person name="Ferrari E."/>
            <person name="Foulger D."/>
            <person name="Fritz C."/>
            <person name="Fujita M."/>
            <person name="Fujita Y."/>
            <person name="Fuma S."/>
            <person name="Galizzi A."/>
            <person name="Galleron N."/>
            <person name="Ghim S.-Y."/>
            <person name="Glaser P."/>
            <person name="Goffeau A."/>
            <person name="Golightly E.J."/>
            <person name="Grandi G."/>
            <person name="Guiseppi G."/>
            <person name="Guy B.J."/>
            <person name="Haga K."/>
            <person name="Haiech J."/>
            <person name="Harwood C.R."/>
            <person name="Henaut A."/>
            <person name="Hilbert H."/>
            <person name="Holsappel S."/>
            <person name="Hosono S."/>
            <person name="Hullo M.-F."/>
            <person name="Itaya M."/>
            <person name="Jones L.-M."/>
            <person name="Joris B."/>
            <person name="Karamata D."/>
            <person name="Kasahara Y."/>
            <person name="Klaerr-Blanchard M."/>
            <person name="Klein C."/>
            <person name="Kobayashi Y."/>
            <person name="Koetter P."/>
            <person name="Koningstein G."/>
            <person name="Krogh S."/>
            <person name="Kumano M."/>
            <person name="Kurita K."/>
            <person name="Lapidus A."/>
            <person name="Lardinois S."/>
            <person name="Lauber J."/>
            <person name="Lazarevic V."/>
            <person name="Lee S.-M."/>
            <person name="Levine A."/>
            <person name="Liu H."/>
            <person name="Masuda S."/>
            <person name="Mauel C."/>
            <person name="Medigue C."/>
            <person name="Medina N."/>
            <person name="Mellado R.P."/>
            <person name="Mizuno M."/>
            <person name="Moestl D."/>
            <person name="Nakai S."/>
            <person name="Noback M."/>
            <person name="Noone D."/>
            <person name="O'Reilly M."/>
            <person name="Ogawa K."/>
            <person name="Ogiwara A."/>
            <person name="Oudega B."/>
            <person name="Park S.-H."/>
            <person name="Parro V."/>
            <person name="Pohl T.M."/>
            <person name="Portetelle D."/>
            <person name="Porwollik S."/>
            <person name="Prescott A.M."/>
            <person name="Presecan E."/>
            <person name="Pujic P."/>
            <person name="Purnelle B."/>
            <person name="Rapoport G."/>
            <person name="Rey M."/>
            <person name="Reynolds S."/>
            <person name="Rieger M."/>
            <person name="Rivolta C."/>
            <person name="Rocha E."/>
            <person name="Roche B."/>
            <person name="Rose M."/>
            <person name="Sadaie Y."/>
            <person name="Sato T."/>
            <person name="Scanlan E."/>
            <person name="Schleich S."/>
            <person name="Schroeter R."/>
            <person name="Scoffone F."/>
            <person name="Sekiguchi J."/>
            <person name="Sekowska A."/>
            <person name="Seror S.J."/>
            <person name="Serror P."/>
            <person name="Shin B.-S."/>
            <person name="Soldo B."/>
            <person name="Sorokin A."/>
            <person name="Tacconi E."/>
            <person name="Takagi T."/>
            <person name="Takahashi H."/>
            <person name="Takemaru K."/>
            <person name="Takeuchi M."/>
            <person name="Tamakoshi A."/>
            <person name="Tanaka T."/>
            <person name="Terpstra P."/>
            <person name="Tognoni A."/>
            <person name="Tosato V."/>
            <person name="Uchiyama S."/>
            <person name="Vandenbol M."/>
            <person name="Vannier F."/>
            <person name="Vassarotti A."/>
            <person name="Viari A."/>
            <person name="Wambutt R."/>
            <person name="Wedler E."/>
            <person name="Wedler H."/>
            <person name="Weitzenegger T."/>
            <person name="Winters P."/>
            <person name="Wipat A."/>
            <person name="Yamamoto H."/>
            <person name="Yamane K."/>
            <person name="Yasumoto K."/>
            <person name="Yata K."/>
            <person name="Yoshida K."/>
            <person name="Yoshikawa H.-F."/>
            <person name="Zumstein E."/>
            <person name="Yoshikawa H."/>
            <person name="Danchin A."/>
        </authorList>
    </citation>
    <scope>NUCLEOTIDE SEQUENCE [LARGE SCALE GENOMIC DNA]</scope>
    <source>
        <strain>168</strain>
    </source>
</reference>
<reference key="3">
    <citation type="journal article" date="2005" name="J. Bacteriol.">
        <title>Synergistic regulation of competence development in Bacillus subtilis by two Rap-Phr systems.</title>
        <authorList>
            <person name="Bongiorni C."/>
            <person name="Ishikawa S."/>
            <person name="Stephenson S."/>
            <person name="Ogasawara N."/>
            <person name="Perego M."/>
        </authorList>
    </citation>
    <scope>FUNCTION</scope>
    <scope>INTERACTION WITH RAPF</scope>
    <scope>INDUCTION</scope>
    <scope>DISRUPTION PHENOTYPE</scope>
    <source>
        <strain>168 / JH642</strain>
    </source>
</reference>
<reference key="4">
    <citation type="journal article" date="2006" name="J. Bacteriol.">
        <title>Modulation of the ComA-dependent quorum response in Bacillus subtilis by multiple Rap proteins and Phr peptides.</title>
        <authorList>
            <person name="Auchtung J.M."/>
            <person name="Lee C.A."/>
            <person name="Grossman A.D."/>
        </authorList>
    </citation>
    <scope>FUNCTION</scope>
    <scope>DISRUPTION PHENOTYPE</scope>
    <source>
        <strain>168 / JH642</strain>
    </source>
</reference>
<reference key="5">
    <citation type="journal article" date="2011" name="PLoS Biol.">
        <title>Structural basis of response regulator inhibition by a bacterial anti-activator protein.</title>
        <authorList>
            <person name="Baker M.D."/>
            <person name="Neiditch M.B."/>
        </authorList>
    </citation>
    <scope>FUNCTION</scope>
    <scope>INTERACTION WITH RAPF</scope>
</reference>
<reference key="6">
    <citation type="journal article" date="2013" name="PLoS Biol.">
        <title>Structural basis of Rap phosphatase inhibition by Phr peptides.</title>
        <authorList>
            <person name="Gallego del Sol F."/>
            <person name="Marina A."/>
        </authorList>
    </citation>
    <scope>FUNCTION</scope>
    <scope>INTERACTION WITH RAPF</scope>
</reference>
<comment type="function">
    <text evidence="1 2 3 4 5">Signaling molecule involved in the regulation of genetic competence development (PubMed:15968044, PubMed:16816200). Secreted during production, but the mature peptide acts intracellularly, indicating that it needs to be imported into the cell to function (By similarity). Stimulates expression of the genes controlled by ComA, a transcriptional factor that regulates the development of genetic competence (PubMed:15968044, PubMed:16816200). Acts by inhibiting RapF, which regulates the activity of ComA (PubMed:15968044, PubMed:16816200, PubMed:22215984, PubMed:23526880).</text>
</comment>
<comment type="subunit">
    <text evidence="2 4 5">Interacts with RapF and inhibits its interaction with ComA.</text>
</comment>
<comment type="interaction">
    <interactant intactId="EBI-15961814">
        <id>P71001</id>
    </interactant>
    <interactant intactId="EBI-15961797">
        <id>P71002</id>
        <label>rapF</label>
    </interactant>
    <organismsDiffer>false</organismsDiffer>
    <experiments>2</experiments>
</comment>
<comment type="subcellular location">
    <subcellularLocation>
        <location evidence="1">Secreted</location>
    </subcellularLocation>
    <subcellularLocation>
        <location evidence="1">Cytoplasm</location>
    </subcellularLocation>
    <text evidence="1">Produced through an export-import maturation process.</text>
</comment>
<comment type="induction">
    <text evidence="2">Part of the rapF-phrF operon, which is controlled by ComA (PubMed:15968044). Transcription of phrF is also regulated by the sigma-H factor (PubMed:15968044).</text>
</comment>
<comment type="PTM">
    <text evidence="1">Contains a predicted signal peptide cleavage site in the N-terminal region, however the propeptide is probably subject to only one processing event, at the N-terminal end of the mature peptide.</text>
</comment>
<comment type="disruption phenotype">
    <text evidence="2 3">Deletion of the gene results in decreased expression of genes activated by ComA, including rapA and the srfA operon (PubMed:15968044, PubMed:16816200). It significantly changes the expression of 72 operons (PubMed:16816200).</text>
</comment>
<comment type="miscellaneous">
    <text evidence="2 3">RapF and PhrF pair of proteins acts synergistically with RapC and CSF in the overall regulation of the ComA transcription factor (PubMed:15968044). CSF, PhrF and PhrK stimulate ComA-dependent gene expression to different levels and are all required for full expression of genes activated by ComA (PubMed:16816200).</text>
</comment>
<comment type="similarity">
    <text evidence="7">Belongs to the Phr family.</text>
</comment>
<dbReference type="EMBL" id="Z80360">
    <property type="protein sequence ID" value="CAB02499.1"/>
    <property type="molecule type" value="Genomic_DNA"/>
</dbReference>
<dbReference type="EMBL" id="AL009126">
    <property type="protein sequence ID" value="CAB15774.1"/>
    <property type="molecule type" value="Genomic_DNA"/>
</dbReference>
<dbReference type="PIR" id="C69677">
    <property type="entry name" value="C69677"/>
</dbReference>
<dbReference type="RefSeq" id="NP_391627.1">
    <property type="nucleotide sequence ID" value="NC_000964.3"/>
</dbReference>
<dbReference type="RefSeq" id="WP_009968329.1">
    <property type="nucleotide sequence ID" value="NZ_OZ025638.1"/>
</dbReference>
<dbReference type="DIP" id="DIP-59431N"/>
<dbReference type="FunCoup" id="P71001">
    <property type="interactions" value="81"/>
</dbReference>
<dbReference type="IntAct" id="P71001">
    <property type="interactions" value="1"/>
</dbReference>
<dbReference type="STRING" id="224308.BSU37470"/>
<dbReference type="PaxDb" id="224308-BSU37470"/>
<dbReference type="EnsemblBacteria" id="CAB15774">
    <property type="protein sequence ID" value="CAB15774"/>
    <property type="gene ID" value="BSU_37470"/>
</dbReference>
<dbReference type="GeneID" id="23678475"/>
<dbReference type="GeneID" id="936721"/>
<dbReference type="KEGG" id="bsu:BSU37470"/>
<dbReference type="PATRIC" id="fig|224308.179.peg.4058"/>
<dbReference type="InParanoid" id="P71001"/>
<dbReference type="BioCyc" id="BSUB:BSU37470-MONOMER"/>
<dbReference type="PRO" id="PR:P71001"/>
<dbReference type="Proteomes" id="UP000001570">
    <property type="component" value="Chromosome"/>
</dbReference>
<dbReference type="GO" id="GO:0005737">
    <property type="term" value="C:cytoplasm"/>
    <property type="evidence" value="ECO:0007669"/>
    <property type="project" value="UniProtKB-SubCell"/>
</dbReference>
<dbReference type="GO" id="GO:0005576">
    <property type="term" value="C:extracellular region"/>
    <property type="evidence" value="ECO:0007669"/>
    <property type="project" value="UniProtKB-SubCell"/>
</dbReference>
<dbReference type="GO" id="GO:0030420">
    <property type="term" value="P:establishment of competence for transformation"/>
    <property type="evidence" value="ECO:0007669"/>
    <property type="project" value="UniProtKB-KW"/>
</dbReference>
<dbReference type="InterPro" id="IPR025899">
    <property type="entry name" value="PhrC_PhrF"/>
</dbReference>
<dbReference type="Pfam" id="PF11131">
    <property type="entry name" value="PhrC_PhrF"/>
    <property type="match status" value="1"/>
</dbReference>
<feature type="propeptide" id="PRO_0000457001" evidence="8">
    <location>
        <begin position="1"/>
        <end position="34"/>
    </location>
</feature>
<feature type="peptide" id="PRO_0000161731" description="RapF inhibitor" evidence="8">
    <location>
        <begin position="35"/>
        <end position="39"/>
    </location>
</feature>
<proteinExistence type="evidence at protein level"/>
<gene>
    <name type="primary">phrF</name>
    <name type="synonym">ywhI</name>
    <name type="ordered locus">BSU37470</name>
</gene>
<organism>
    <name type="scientific">Bacillus subtilis (strain 168)</name>
    <dbReference type="NCBI Taxonomy" id="224308"/>
    <lineage>
        <taxon>Bacteria</taxon>
        <taxon>Bacillati</taxon>
        <taxon>Bacillota</taxon>
        <taxon>Bacilli</taxon>
        <taxon>Bacillales</taxon>
        <taxon>Bacillaceae</taxon>
        <taxon>Bacillus</taxon>
    </lineage>
</organism>
<keyword id="KW-0178">Competence</keyword>
<keyword id="KW-0963">Cytoplasm</keyword>
<keyword id="KW-1185">Reference proteome</keyword>
<keyword id="KW-0964">Secreted</keyword>